<accession>Q0SSI9</accession>
<reference key="1">
    <citation type="journal article" date="2006" name="Genome Res.">
        <title>Skewed genomic variability in strains of the toxigenic bacterial pathogen, Clostridium perfringens.</title>
        <authorList>
            <person name="Myers G.S.A."/>
            <person name="Rasko D.A."/>
            <person name="Cheung J.K."/>
            <person name="Ravel J."/>
            <person name="Seshadri R."/>
            <person name="DeBoy R.T."/>
            <person name="Ren Q."/>
            <person name="Varga J."/>
            <person name="Awad M.M."/>
            <person name="Brinkac L.M."/>
            <person name="Daugherty S.C."/>
            <person name="Haft D.H."/>
            <person name="Dodson R.J."/>
            <person name="Madupu R."/>
            <person name="Nelson W.C."/>
            <person name="Rosovitz M.J."/>
            <person name="Sullivan S.A."/>
            <person name="Khouri H."/>
            <person name="Dimitrov G.I."/>
            <person name="Watkins K.L."/>
            <person name="Mulligan S."/>
            <person name="Benton J."/>
            <person name="Radune D."/>
            <person name="Fisher D.J."/>
            <person name="Atkins H.S."/>
            <person name="Hiscox T."/>
            <person name="Jost B.H."/>
            <person name="Billington S.J."/>
            <person name="Songer J.G."/>
            <person name="McClane B.A."/>
            <person name="Titball R.W."/>
            <person name="Rood J.I."/>
            <person name="Melville S.B."/>
            <person name="Paulsen I.T."/>
        </authorList>
    </citation>
    <scope>NUCLEOTIDE SEQUENCE [LARGE SCALE GENOMIC DNA]</scope>
    <source>
        <strain>SM101 / Type A</strain>
    </source>
</reference>
<dbReference type="EC" id="5.4.99.62" evidence="1"/>
<dbReference type="EMBL" id="CP000312">
    <property type="protein sequence ID" value="ABG86661.1"/>
    <property type="molecule type" value="Genomic_DNA"/>
</dbReference>
<dbReference type="RefSeq" id="WP_011592546.1">
    <property type="nucleotide sequence ID" value="NC_008262.1"/>
</dbReference>
<dbReference type="SMR" id="Q0SSI9"/>
<dbReference type="KEGG" id="cpr:CPR_1602"/>
<dbReference type="UniPathway" id="UPA00916">
    <property type="reaction ID" value="UER00888"/>
</dbReference>
<dbReference type="Proteomes" id="UP000001824">
    <property type="component" value="Chromosome"/>
</dbReference>
<dbReference type="GO" id="GO:0005829">
    <property type="term" value="C:cytosol"/>
    <property type="evidence" value="ECO:0007669"/>
    <property type="project" value="TreeGrafter"/>
</dbReference>
<dbReference type="GO" id="GO:0062193">
    <property type="term" value="F:D-ribose pyranase activity"/>
    <property type="evidence" value="ECO:0007669"/>
    <property type="project" value="UniProtKB-EC"/>
</dbReference>
<dbReference type="GO" id="GO:0016872">
    <property type="term" value="F:intramolecular lyase activity"/>
    <property type="evidence" value="ECO:0007669"/>
    <property type="project" value="UniProtKB-UniRule"/>
</dbReference>
<dbReference type="GO" id="GO:0048029">
    <property type="term" value="F:monosaccharide binding"/>
    <property type="evidence" value="ECO:0007669"/>
    <property type="project" value="InterPro"/>
</dbReference>
<dbReference type="GO" id="GO:0019303">
    <property type="term" value="P:D-ribose catabolic process"/>
    <property type="evidence" value="ECO:0007669"/>
    <property type="project" value="UniProtKB-UniRule"/>
</dbReference>
<dbReference type="Gene3D" id="3.40.1650.10">
    <property type="entry name" value="RbsD-like domain"/>
    <property type="match status" value="1"/>
</dbReference>
<dbReference type="HAMAP" id="MF_01661">
    <property type="entry name" value="D_rib_pyranase"/>
    <property type="match status" value="1"/>
</dbReference>
<dbReference type="InterPro" id="IPR023064">
    <property type="entry name" value="D-ribose_pyranase"/>
</dbReference>
<dbReference type="InterPro" id="IPR023750">
    <property type="entry name" value="RbsD-like_sf"/>
</dbReference>
<dbReference type="InterPro" id="IPR007721">
    <property type="entry name" value="RbsD_FucU"/>
</dbReference>
<dbReference type="NCBIfam" id="NF008761">
    <property type="entry name" value="PRK11797.1"/>
    <property type="match status" value="1"/>
</dbReference>
<dbReference type="PANTHER" id="PTHR37831">
    <property type="entry name" value="D-RIBOSE PYRANASE"/>
    <property type="match status" value="1"/>
</dbReference>
<dbReference type="PANTHER" id="PTHR37831:SF1">
    <property type="entry name" value="D-RIBOSE PYRANASE"/>
    <property type="match status" value="1"/>
</dbReference>
<dbReference type="Pfam" id="PF05025">
    <property type="entry name" value="RbsD_FucU"/>
    <property type="match status" value="1"/>
</dbReference>
<dbReference type="SUPFAM" id="SSF102546">
    <property type="entry name" value="RbsD-like"/>
    <property type="match status" value="1"/>
</dbReference>
<name>RBSD_CLOPS</name>
<keyword id="KW-0119">Carbohydrate metabolism</keyword>
<keyword id="KW-0963">Cytoplasm</keyword>
<keyword id="KW-0413">Isomerase</keyword>
<protein>
    <recommendedName>
        <fullName evidence="1">D-ribose pyranase</fullName>
        <ecNumber evidence="1">5.4.99.62</ecNumber>
    </recommendedName>
</protein>
<gene>
    <name evidence="1" type="primary">rbsD</name>
    <name type="ordered locus">CPR_1602</name>
</gene>
<evidence type="ECO:0000255" key="1">
    <source>
        <dbReference type="HAMAP-Rule" id="MF_01661"/>
    </source>
</evidence>
<comment type="function">
    <text evidence="1">Catalyzes the interconversion of beta-pyran and beta-furan forms of D-ribose.</text>
</comment>
<comment type="catalytic activity">
    <reaction evidence="1">
        <text>beta-D-ribopyranose = beta-D-ribofuranose</text>
        <dbReference type="Rhea" id="RHEA:25432"/>
        <dbReference type="ChEBI" id="CHEBI:27476"/>
        <dbReference type="ChEBI" id="CHEBI:47002"/>
        <dbReference type="EC" id="5.4.99.62"/>
    </reaction>
</comment>
<comment type="pathway">
    <text evidence="1">Carbohydrate metabolism; D-ribose degradation; D-ribose 5-phosphate from beta-D-ribopyranose: step 1/2.</text>
</comment>
<comment type="subunit">
    <text evidence="1">Homodecamer.</text>
</comment>
<comment type="subcellular location">
    <subcellularLocation>
        <location evidence="1">Cytoplasm</location>
    </subcellularLocation>
</comment>
<comment type="similarity">
    <text evidence="1">Belongs to the RbsD / FucU family. RbsD subfamily.</text>
</comment>
<proteinExistence type="inferred from homology"/>
<organism>
    <name type="scientific">Clostridium perfringens (strain SM101 / Type A)</name>
    <dbReference type="NCBI Taxonomy" id="289380"/>
    <lineage>
        <taxon>Bacteria</taxon>
        <taxon>Bacillati</taxon>
        <taxon>Bacillota</taxon>
        <taxon>Clostridia</taxon>
        <taxon>Eubacteriales</taxon>
        <taxon>Clostridiaceae</taxon>
        <taxon>Clostridium</taxon>
    </lineage>
</organism>
<feature type="chain" id="PRO_0000346187" description="D-ribose pyranase">
    <location>
        <begin position="1"/>
        <end position="131"/>
    </location>
</feature>
<feature type="active site" description="Proton donor" evidence="1">
    <location>
        <position position="20"/>
    </location>
</feature>
<feature type="binding site" evidence="1">
    <location>
        <position position="28"/>
    </location>
    <ligand>
        <name>substrate</name>
    </ligand>
</feature>
<feature type="binding site" evidence="1">
    <location>
        <position position="98"/>
    </location>
    <ligand>
        <name>substrate</name>
    </ligand>
</feature>
<feature type="binding site" evidence="1">
    <location>
        <begin position="120"/>
        <end position="122"/>
    </location>
    <ligand>
        <name>substrate</name>
    </ligand>
</feature>
<sequence length="131" mass="14580">MRKTSLLNSNISSVISKMGHTDMLAIGDCGLPIPKETERIDLALIKGVPGFIETLKAILEELQVEEVLIAKETEKVSPELFTKIKEIIKDTKITFISHEELKKELKDCKAVVRTGEQTPYANIILKSGVVF</sequence>